<dbReference type="EC" id="7.1.1.-" evidence="1"/>
<dbReference type="EMBL" id="BA000019">
    <property type="protein sequence ID" value="BAB76020.1"/>
    <property type="molecule type" value="Genomic_DNA"/>
</dbReference>
<dbReference type="PIR" id="AB2346">
    <property type="entry name" value="AB2346"/>
</dbReference>
<dbReference type="RefSeq" id="WP_010998459.1">
    <property type="nucleotide sequence ID" value="NZ_RSCN01000027.1"/>
</dbReference>
<dbReference type="SMR" id="Q8YP79"/>
<dbReference type="STRING" id="103690.gene:10496370"/>
<dbReference type="KEGG" id="ana:asr4321"/>
<dbReference type="eggNOG" id="ENOG5032XZT">
    <property type="taxonomic scope" value="Bacteria"/>
</dbReference>
<dbReference type="OrthoDB" id="426633at2"/>
<dbReference type="Proteomes" id="UP000002483">
    <property type="component" value="Chromosome"/>
</dbReference>
<dbReference type="GO" id="GO:0031676">
    <property type="term" value="C:plasma membrane-derived thylakoid membrane"/>
    <property type="evidence" value="ECO:0007669"/>
    <property type="project" value="UniProtKB-SubCell"/>
</dbReference>
<dbReference type="GO" id="GO:0016655">
    <property type="term" value="F:oxidoreductase activity, acting on NAD(P)H, quinone or similar compound as acceptor"/>
    <property type="evidence" value="ECO:0007669"/>
    <property type="project" value="UniProtKB-UniRule"/>
</dbReference>
<dbReference type="GO" id="GO:0048038">
    <property type="term" value="F:quinone binding"/>
    <property type="evidence" value="ECO:0007669"/>
    <property type="project" value="UniProtKB-KW"/>
</dbReference>
<dbReference type="HAMAP" id="MF_01354">
    <property type="entry name" value="NDH1_NDH1O"/>
    <property type="match status" value="1"/>
</dbReference>
<dbReference type="InterPro" id="IPR020905">
    <property type="entry name" value="NdhO"/>
</dbReference>
<dbReference type="Pfam" id="PF11910">
    <property type="entry name" value="NdhO"/>
    <property type="match status" value="1"/>
</dbReference>
<proteinExistence type="inferred from homology"/>
<comment type="function">
    <text evidence="1">NDH-1 shuttles electrons from an unknown electron donor, via FMN and iron-sulfur (Fe-S) centers, to quinones in the respiratory and/or the photosynthetic chain. The immediate electron acceptor for the enzyme in this species is believed to be plastoquinone. Couples the redox reaction to proton translocation, and thus conserves the redox energy in a proton gradient. Cyanobacterial NDH-1 also plays a role in inorganic carbon-concentration.</text>
</comment>
<comment type="catalytic activity">
    <reaction evidence="1">
        <text>a plastoquinone + NADH + (n+1) H(+)(in) = a plastoquinol + NAD(+) + n H(+)(out)</text>
        <dbReference type="Rhea" id="RHEA:42608"/>
        <dbReference type="Rhea" id="RHEA-COMP:9561"/>
        <dbReference type="Rhea" id="RHEA-COMP:9562"/>
        <dbReference type="ChEBI" id="CHEBI:15378"/>
        <dbReference type="ChEBI" id="CHEBI:17757"/>
        <dbReference type="ChEBI" id="CHEBI:57540"/>
        <dbReference type="ChEBI" id="CHEBI:57945"/>
        <dbReference type="ChEBI" id="CHEBI:62192"/>
    </reaction>
</comment>
<comment type="catalytic activity">
    <reaction evidence="1">
        <text>a plastoquinone + NADPH + (n+1) H(+)(in) = a plastoquinol + NADP(+) + n H(+)(out)</text>
        <dbReference type="Rhea" id="RHEA:42612"/>
        <dbReference type="Rhea" id="RHEA-COMP:9561"/>
        <dbReference type="Rhea" id="RHEA-COMP:9562"/>
        <dbReference type="ChEBI" id="CHEBI:15378"/>
        <dbReference type="ChEBI" id="CHEBI:17757"/>
        <dbReference type="ChEBI" id="CHEBI:57783"/>
        <dbReference type="ChEBI" id="CHEBI:58349"/>
        <dbReference type="ChEBI" id="CHEBI:62192"/>
    </reaction>
</comment>
<comment type="subunit">
    <text evidence="1">NDH-1 can be composed of about 15 different subunits; different subcomplexes with different compositions have been identified which probably have different functions.</text>
</comment>
<comment type="subcellular location">
    <subcellularLocation>
        <location evidence="1">Cellular thylakoid membrane</location>
        <topology evidence="1">Peripheral membrane protein</topology>
        <orientation evidence="1">Cytoplasmic side</orientation>
    </subcellularLocation>
</comment>
<comment type="similarity">
    <text evidence="1">Belongs to the complex I NdhO subunit family.</text>
</comment>
<reference key="1">
    <citation type="journal article" date="2001" name="DNA Res.">
        <title>Complete genomic sequence of the filamentous nitrogen-fixing cyanobacterium Anabaena sp. strain PCC 7120.</title>
        <authorList>
            <person name="Kaneko T."/>
            <person name="Nakamura Y."/>
            <person name="Wolk C.P."/>
            <person name="Kuritz T."/>
            <person name="Sasamoto S."/>
            <person name="Watanabe A."/>
            <person name="Iriguchi M."/>
            <person name="Ishikawa A."/>
            <person name="Kawashima K."/>
            <person name="Kimura T."/>
            <person name="Kishida Y."/>
            <person name="Kohara M."/>
            <person name="Matsumoto M."/>
            <person name="Matsuno A."/>
            <person name="Muraki A."/>
            <person name="Nakazaki N."/>
            <person name="Shimpo S."/>
            <person name="Sugimoto M."/>
            <person name="Takazawa M."/>
            <person name="Yamada M."/>
            <person name="Yasuda M."/>
            <person name="Tabata S."/>
        </authorList>
    </citation>
    <scope>NUCLEOTIDE SEQUENCE [LARGE SCALE GENOMIC DNA]</scope>
    <source>
        <strain>PCC 7120 / SAG 25.82 / UTEX 2576</strain>
    </source>
</reference>
<gene>
    <name evidence="1" type="primary">ndhO</name>
    <name type="ordered locus">asr4321</name>
</gene>
<name>NDHO_NOSS1</name>
<sequence>MPVKKGEMVRAIREKLENSVEAKASDTRFPAYLFETKGEVVDIKGDYALVMFGQVPTPNIWLRLDQIESF</sequence>
<accession>Q8YP79</accession>
<keyword id="KW-0472">Membrane</keyword>
<keyword id="KW-0520">NAD</keyword>
<keyword id="KW-0521">NADP</keyword>
<keyword id="KW-0618">Plastoquinone</keyword>
<keyword id="KW-0874">Quinone</keyword>
<keyword id="KW-1185">Reference proteome</keyword>
<keyword id="KW-0793">Thylakoid</keyword>
<keyword id="KW-1278">Translocase</keyword>
<keyword id="KW-0813">Transport</keyword>
<feature type="chain" id="PRO_0000353632" description="NAD(P)H-quinone oxidoreductase subunit O">
    <location>
        <begin position="1"/>
        <end position="70"/>
    </location>
</feature>
<evidence type="ECO:0000255" key="1">
    <source>
        <dbReference type="HAMAP-Rule" id="MF_01354"/>
    </source>
</evidence>
<protein>
    <recommendedName>
        <fullName evidence="1">NAD(P)H-quinone oxidoreductase subunit O</fullName>
        <ecNumber evidence="1">7.1.1.-</ecNumber>
    </recommendedName>
    <alternativeName>
        <fullName evidence="1">NAD(P)H dehydrogenase I subunit O</fullName>
    </alternativeName>
    <alternativeName>
        <fullName>NDH-1 subunit O</fullName>
    </alternativeName>
    <alternativeName>
        <fullName>NDH-O</fullName>
    </alternativeName>
</protein>
<organism>
    <name type="scientific">Nostoc sp. (strain PCC 7120 / SAG 25.82 / UTEX 2576)</name>
    <dbReference type="NCBI Taxonomy" id="103690"/>
    <lineage>
        <taxon>Bacteria</taxon>
        <taxon>Bacillati</taxon>
        <taxon>Cyanobacteriota</taxon>
        <taxon>Cyanophyceae</taxon>
        <taxon>Nostocales</taxon>
        <taxon>Nostocaceae</taxon>
        <taxon>Nostoc</taxon>
    </lineage>
</organism>